<comment type="catalytic activity">
    <reaction evidence="1">
        <text>L-aspartate + NH4(+) + ATP = L-asparagine + AMP + diphosphate + H(+)</text>
        <dbReference type="Rhea" id="RHEA:11372"/>
        <dbReference type="ChEBI" id="CHEBI:15378"/>
        <dbReference type="ChEBI" id="CHEBI:28938"/>
        <dbReference type="ChEBI" id="CHEBI:29991"/>
        <dbReference type="ChEBI" id="CHEBI:30616"/>
        <dbReference type="ChEBI" id="CHEBI:33019"/>
        <dbReference type="ChEBI" id="CHEBI:58048"/>
        <dbReference type="ChEBI" id="CHEBI:456215"/>
        <dbReference type="EC" id="6.3.1.1"/>
    </reaction>
</comment>
<comment type="pathway">
    <text evidence="1">Amino-acid biosynthesis; L-asparagine biosynthesis; L-asparagine from L-aspartate (ammonia route): step 1/1.</text>
</comment>
<comment type="subcellular location">
    <subcellularLocation>
        <location evidence="1">Cytoplasm</location>
    </subcellularLocation>
</comment>
<comment type="similarity">
    <text evidence="1">Belongs to the class-II aminoacyl-tRNA synthetase family. AsnA subfamily.</text>
</comment>
<proteinExistence type="inferred from homology"/>
<gene>
    <name evidence="1" type="primary">asnA</name>
    <name type="ordered locus">UTI89_C4299</name>
</gene>
<keyword id="KW-0028">Amino-acid biosynthesis</keyword>
<keyword id="KW-0061">Asparagine biosynthesis</keyword>
<keyword id="KW-0067">ATP-binding</keyword>
<keyword id="KW-0963">Cytoplasm</keyword>
<keyword id="KW-0436">Ligase</keyword>
<keyword id="KW-0547">Nucleotide-binding</keyword>
<feature type="chain" id="PRO_1000017943" description="Aspartate--ammonia ligase">
    <location>
        <begin position="1"/>
        <end position="330"/>
    </location>
</feature>
<evidence type="ECO:0000255" key="1">
    <source>
        <dbReference type="HAMAP-Rule" id="MF_00555"/>
    </source>
</evidence>
<reference key="1">
    <citation type="journal article" date="2006" name="Proc. Natl. Acad. Sci. U.S.A.">
        <title>Identification of genes subject to positive selection in uropathogenic strains of Escherichia coli: a comparative genomics approach.</title>
        <authorList>
            <person name="Chen S.L."/>
            <person name="Hung C.-S."/>
            <person name="Xu J."/>
            <person name="Reigstad C.S."/>
            <person name="Magrini V."/>
            <person name="Sabo A."/>
            <person name="Blasiar D."/>
            <person name="Bieri T."/>
            <person name="Meyer R.R."/>
            <person name="Ozersky P."/>
            <person name="Armstrong J.R."/>
            <person name="Fulton R.S."/>
            <person name="Latreille J.P."/>
            <person name="Spieth J."/>
            <person name="Hooton T.M."/>
            <person name="Mardis E.R."/>
            <person name="Hultgren S.J."/>
            <person name="Gordon J.I."/>
        </authorList>
    </citation>
    <scope>NUCLEOTIDE SEQUENCE [LARGE SCALE GENOMIC DNA]</scope>
    <source>
        <strain>UTI89 / UPEC</strain>
    </source>
</reference>
<dbReference type="EC" id="6.3.1.1" evidence="1"/>
<dbReference type="EMBL" id="CP000243">
    <property type="protein sequence ID" value="ABE09726.1"/>
    <property type="molecule type" value="Genomic_DNA"/>
</dbReference>
<dbReference type="RefSeq" id="WP_000845129.1">
    <property type="nucleotide sequence ID" value="NZ_CP064825.1"/>
</dbReference>
<dbReference type="SMR" id="Q1R4I8"/>
<dbReference type="KEGG" id="eci:UTI89_C4299"/>
<dbReference type="HOGENOM" id="CLU_071543_0_0_6"/>
<dbReference type="UniPathway" id="UPA00134">
    <property type="reaction ID" value="UER00194"/>
</dbReference>
<dbReference type="Proteomes" id="UP000001952">
    <property type="component" value="Chromosome"/>
</dbReference>
<dbReference type="GO" id="GO:0005829">
    <property type="term" value="C:cytosol"/>
    <property type="evidence" value="ECO:0007669"/>
    <property type="project" value="TreeGrafter"/>
</dbReference>
<dbReference type="GO" id="GO:0004071">
    <property type="term" value="F:aspartate-ammonia ligase activity"/>
    <property type="evidence" value="ECO:0007669"/>
    <property type="project" value="UniProtKB-UniRule"/>
</dbReference>
<dbReference type="GO" id="GO:0005524">
    <property type="term" value="F:ATP binding"/>
    <property type="evidence" value="ECO:0007669"/>
    <property type="project" value="UniProtKB-UniRule"/>
</dbReference>
<dbReference type="GO" id="GO:0070981">
    <property type="term" value="P:L-asparagine biosynthetic process"/>
    <property type="evidence" value="ECO:0007669"/>
    <property type="project" value="UniProtKB-UniRule"/>
</dbReference>
<dbReference type="CDD" id="cd00645">
    <property type="entry name" value="AsnA"/>
    <property type="match status" value="1"/>
</dbReference>
<dbReference type="FunFam" id="3.30.930.10:FF:000025">
    <property type="entry name" value="Aspartate--ammonia ligase"/>
    <property type="match status" value="1"/>
</dbReference>
<dbReference type="Gene3D" id="3.30.930.10">
    <property type="entry name" value="Bira Bifunctional Protein, Domain 2"/>
    <property type="match status" value="1"/>
</dbReference>
<dbReference type="HAMAP" id="MF_00555">
    <property type="entry name" value="AsnA"/>
    <property type="match status" value="1"/>
</dbReference>
<dbReference type="InterPro" id="IPR006195">
    <property type="entry name" value="aa-tRNA-synth_II"/>
</dbReference>
<dbReference type="InterPro" id="IPR045864">
    <property type="entry name" value="aa-tRNA-synth_II/BPL/LPL"/>
</dbReference>
<dbReference type="InterPro" id="IPR004618">
    <property type="entry name" value="AsnA"/>
</dbReference>
<dbReference type="NCBIfam" id="TIGR00669">
    <property type="entry name" value="asnA"/>
    <property type="match status" value="1"/>
</dbReference>
<dbReference type="PANTHER" id="PTHR30073">
    <property type="entry name" value="ASPARTATE--AMMONIA LIGASE"/>
    <property type="match status" value="1"/>
</dbReference>
<dbReference type="PANTHER" id="PTHR30073:SF5">
    <property type="entry name" value="ASPARTATE--AMMONIA LIGASE"/>
    <property type="match status" value="1"/>
</dbReference>
<dbReference type="Pfam" id="PF03590">
    <property type="entry name" value="AsnA"/>
    <property type="match status" value="1"/>
</dbReference>
<dbReference type="PIRSF" id="PIRSF001555">
    <property type="entry name" value="Asp_ammon_ligase"/>
    <property type="match status" value="1"/>
</dbReference>
<dbReference type="SUPFAM" id="SSF55681">
    <property type="entry name" value="Class II aaRS and biotin synthetases"/>
    <property type="match status" value="1"/>
</dbReference>
<dbReference type="PROSITE" id="PS50862">
    <property type="entry name" value="AA_TRNA_LIGASE_II"/>
    <property type="match status" value="1"/>
</dbReference>
<protein>
    <recommendedName>
        <fullName evidence="1">Aspartate--ammonia ligase</fullName>
        <ecNumber evidence="1">6.3.1.1</ecNumber>
    </recommendedName>
    <alternativeName>
        <fullName evidence="1">Asparagine synthetase A</fullName>
    </alternativeName>
</protein>
<organism>
    <name type="scientific">Escherichia coli (strain UTI89 / UPEC)</name>
    <dbReference type="NCBI Taxonomy" id="364106"/>
    <lineage>
        <taxon>Bacteria</taxon>
        <taxon>Pseudomonadati</taxon>
        <taxon>Pseudomonadota</taxon>
        <taxon>Gammaproteobacteria</taxon>
        <taxon>Enterobacterales</taxon>
        <taxon>Enterobacteriaceae</taxon>
        <taxon>Escherichia</taxon>
    </lineage>
</organism>
<sequence length="330" mass="36723">MKTAYIAKQRQISFVKSHFSRQLEERLGLIEVQAPILSRVGDGTQDNLSGCEKAVQVKVKALPDAQFEVVHSLAKWKRQTLGQHDFSAGEGLYTHMKALRPDEDRLSPLHSVYVDQWDWERVMGDGERQFSTLKSTVEAIWEGIKATEAAVSEEFGLAPFLPDQIHFVHSQELLSRYPELDAKGRERAIAKDLGAVFLVGIGGKLSDGHRHDVRAPDYDDWSTPSELGHAGLNGDILVWNPVLEDAFELSSMGIRVDADTLKHQLALTGDEDRLELEWHQALLRGEMPQTIGGGIGQSRLTMLLLQLPHIGQVQCGVWPAAVRESVPSLL</sequence>
<accession>Q1R4I8</accession>
<name>ASNA_ECOUT</name>